<feature type="chain" id="PRO_1000193206" description="NADPH-dependent 7-cyano-7-deazaguanine reductase">
    <location>
        <begin position="1"/>
        <end position="270"/>
    </location>
</feature>
<feature type="active site" description="Thioimide intermediate" evidence="1">
    <location>
        <position position="177"/>
    </location>
</feature>
<feature type="active site" description="Proton donor" evidence="1">
    <location>
        <position position="184"/>
    </location>
</feature>
<feature type="binding site" evidence="1">
    <location>
        <begin position="79"/>
        <end position="81"/>
    </location>
    <ligand>
        <name>substrate</name>
    </ligand>
</feature>
<feature type="binding site" evidence="1">
    <location>
        <begin position="81"/>
        <end position="82"/>
    </location>
    <ligand>
        <name>NADPH</name>
        <dbReference type="ChEBI" id="CHEBI:57783"/>
    </ligand>
</feature>
<feature type="binding site" evidence="1">
    <location>
        <begin position="216"/>
        <end position="217"/>
    </location>
    <ligand>
        <name>substrate</name>
    </ligand>
</feature>
<feature type="binding site" evidence="1">
    <location>
        <begin position="245"/>
        <end position="246"/>
    </location>
    <ligand>
        <name>NADPH</name>
        <dbReference type="ChEBI" id="CHEBI:57783"/>
    </ligand>
</feature>
<protein>
    <recommendedName>
        <fullName evidence="1">NADPH-dependent 7-cyano-7-deazaguanine reductase</fullName>
        <ecNumber evidence="1">1.7.1.13</ecNumber>
    </recommendedName>
    <alternativeName>
        <fullName evidence="1">7-cyano-7-carbaguanine reductase</fullName>
    </alternativeName>
    <alternativeName>
        <fullName evidence="1">NADPH-dependent nitrile oxidoreductase</fullName>
    </alternativeName>
    <alternativeName>
        <fullName evidence="1">PreQ(0) reductase</fullName>
    </alternativeName>
</protein>
<gene>
    <name evidence="1" type="primary">queF</name>
    <name type="ordered locus">A1S_2313</name>
</gene>
<keyword id="KW-0963">Cytoplasm</keyword>
<keyword id="KW-0521">NADP</keyword>
<keyword id="KW-0560">Oxidoreductase</keyword>
<keyword id="KW-0671">Queuosine biosynthesis</keyword>
<accession>A3M741</accession>
<evidence type="ECO:0000255" key="1">
    <source>
        <dbReference type="HAMAP-Rule" id="MF_00817"/>
    </source>
</evidence>
<comment type="function">
    <text evidence="1">Catalyzes the NADPH-dependent reduction of 7-cyano-7-deazaguanine (preQ0) to 7-aminomethyl-7-deazaguanine (preQ1).</text>
</comment>
<comment type="catalytic activity">
    <reaction evidence="1">
        <text>7-aminomethyl-7-carbaguanine + 2 NADP(+) = 7-cyano-7-deazaguanine + 2 NADPH + 3 H(+)</text>
        <dbReference type="Rhea" id="RHEA:13409"/>
        <dbReference type="ChEBI" id="CHEBI:15378"/>
        <dbReference type="ChEBI" id="CHEBI:45075"/>
        <dbReference type="ChEBI" id="CHEBI:57783"/>
        <dbReference type="ChEBI" id="CHEBI:58349"/>
        <dbReference type="ChEBI" id="CHEBI:58703"/>
        <dbReference type="EC" id="1.7.1.13"/>
    </reaction>
</comment>
<comment type="pathway">
    <text evidence="1">tRNA modification; tRNA-queuosine biosynthesis.</text>
</comment>
<comment type="subunit">
    <text evidence="1">Homodimer.</text>
</comment>
<comment type="subcellular location">
    <subcellularLocation>
        <location evidence="1">Cytoplasm</location>
    </subcellularLocation>
</comment>
<comment type="similarity">
    <text evidence="1">Belongs to the GTP cyclohydrolase I family. QueF type 2 subfamily.</text>
</comment>
<reference key="1">
    <citation type="journal article" date="2007" name="Genes Dev.">
        <title>New insights into Acinetobacter baumannii pathogenesis revealed by high-density pyrosequencing and transposon mutagenesis.</title>
        <authorList>
            <person name="Smith M.G."/>
            <person name="Gianoulis T.A."/>
            <person name="Pukatzki S."/>
            <person name="Mekalanos J.J."/>
            <person name="Ornston L.N."/>
            <person name="Gerstein M."/>
            <person name="Snyder M."/>
        </authorList>
    </citation>
    <scope>NUCLEOTIDE SEQUENCE [LARGE SCALE GENOMIC DNA]</scope>
    <source>
        <strain>ATCC 17978 / DSM 105126 / CIP 53.77 / LMG 1025 / NCDC KC755 / 5377</strain>
    </source>
</reference>
<name>QUEF_ACIBT</name>
<proteinExistence type="inferred from homology"/>
<organism>
    <name type="scientific">Acinetobacter baumannii (strain ATCC 17978 / DSM 105126 / CIP 53.77 / LMG 1025 / NCDC KC755 / 5377)</name>
    <dbReference type="NCBI Taxonomy" id="400667"/>
    <lineage>
        <taxon>Bacteria</taxon>
        <taxon>Pseudomonadati</taxon>
        <taxon>Pseudomonadota</taxon>
        <taxon>Gammaproteobacteria</taxon>
        <taxon>Moraxellales</taxon>
        <taxon>Moraxellaceae</taxon>
        <taxon>Acinetobacter</taxon>
        <taxon>Acinetobacter calcoaceticus/baumannii complex</taxon>
    </lineage>
</organism>
<dbReference type="EC" id="1.7.1.13" evidence="1"/>
<dbReference type="EMBL" id="CP000521">
    <property type="protein sequence ID" value="ABO12735.2"/>
    <property type="molecule type" value="Genomic_DNA"/>
</dbReference>
<dbReference type="RefSeq" id="WP_000110164.1">
    <property type="nucleotide sequence ID" value="NZ_CP053098.1"/>
</dbReference>
<dbReference type="SMR" id="A3M741"/>
<dbReference type="KEGG" id="acb:A1S_2313"/>
<dbReference type="HOGENOM" id="CLU_054738_0_0_6"/>
<dbReference type="UniPathway" id="UPA00392"/>
<dbReference type="GO" id="GO:0005737">
    <property type="term" value="C:cytoplasm"/>
    <property type="evidence" value="ECO:0007669"/>
    <property type="project" value="UniProtKB-SubCell"/>
</dbReference>
<dbReference type="GO" id="GO:0033739">
    <property type="term" value="F:preQ1 synthase activity"/>
    <property type="evidence" value="ECO:0007669"/>
    <property type="project" value="UniProtKB-UniRule"/>
</dbReference>
<dbReference type="GO" id="GO:0008616">
    <property type="term" value="P:queuosine biosynthetic process"/>
    <property type="evidence" value="ECO:0007669"/>
    <property type="project" value="UniProtKB-UniRule"/>
</dbReference>
<dbReference type="GO" id="GO:0006400">
    <property type="term" value="P:tRNA modification"/>
    <property type="evidence" value="ECO:0007669"/>
    <property type="project" value="UniProtKB-UniRule"/>
</dbReference>
<dbReference type="Gene3D" id="3.30.1130.10">
    <property type="match status" value="2"/>
</dbReference>
<dbReference type="HAMAP" id="MF_00817">
    <property type="entry name" value="QueF_type2"/>
    <property type="match status" value="1"/>
</dbReference>
<dbReference type="InterPro" id="IPR043133">
    <property type="entry name" value="GTP-CH-I_C/QueF"/>
</dbReference>
<dbReference type="InterPro" id="IPR050084">
    <property type="entry name" value="NADPH_dep_7-cyano-7-deazaG_red"/>
</dbReference>
<dbReference type="InterPro" id="IPR029500">
    <property type="entry name" value="QueF"/>
</dbReference>
<dbReference type="InterPro" id="IPR029139">
    <property type="entry name" value="QueF_N"/>
</dbReference>
<dbReference type="InterPro" id="IPR016428">
    <property type="entry name" value="QueF_type2"/>
</dbReference>
<dbReference type="NCBIfam" id="TIGR03138">
    <property type="entry name" value="QueF"/>
    <property type="match status" value="1"/>
</dbReference>
<dbReference type="PANTHER" id="PTHR34354">
    <property type="entry name" value="NADPH-DEPENDENT 7-CYANO-7-DEAZAGUANINE REDUCTASE"/>
    <property type="match status" value="1"/>
</dbReference>
<dbReference type="PANTHER" id="PTHR34354:SF1">
    <property type="entry name" value="NADPH-DEPENDENT 7-CYANO-7-DEAZAGUANINE REDUCTASE"/>
    <property type="match status" value="1"/>
</dbReference>
<dbReference type="Pfam" id="PF14489">
    <property type="entry name" value="QueF"/>
    <property type="match status" value="1"/>
</dbReference>
<dbReference type="Pfam" id="PF14819">
    <property type="entry name" value="QueF_N"/>
    <property type="match status" value="1"/>
</dbReference>
<dbReference type="PIRSF" id="PIRSF004750">
    <property type="entry name" value="Nitrile_oxidored_YqcD_prd"/>
    <property type="match status" value="1"/>
</dbReference>
<dbReference type="SUPFAM" id="SSF55620">
    <property type="entry name" value="Tetrahydrobiopterin biosynthesis enzymes-like"/>
    <property type="match status" value="1"/>
</dbReference>
<sequence length="270" mass="30978">MSVEQSLLGKETQYPTSYQPDVLFPIARAQSREKYAHIEGITQGKDWWHVFEISWLNAHGIPQVAIGRITLPASSPNLIESKSLKLYFNSLNFTQFDSTQSFIETVEKDLSAAAGAKVELTLFQVDDLEISKPQGICIDDLMPERLEQHPDATLLKLDESDEEIEVELYSHLLRSNCPVTGQPDWGTVFIRFKGKKPCYRSILAYIISYRQHNGFHEQCVEQIFADIWQNLQPEKLMVYATYTRRGGLDINPCRVSDLTWMPKPIRLARQ</sequence>